<keyword id="KW-1185">Reference proteome</keyword>
<accession>Q886I3</accession>
<gene>
    <name type="ordered locus">PSPTO_1596</name>
</gene>
<evidence type="ECO:0000256" key="1">
    <source>
        <dbReference type="SAM" id="MobiDB-lite"/>
    </source>
</evidence>
<evidence type="ECO:0000305" key="2"/>
<sequence length="63" mass="6516">MSSTSDKVKGMANEAVGNVKQAVGKATDNTKLQAEGKAQELKGEGQQAKGEVKDAVKKGVDKV</sequence>
<organism>
    <name type="scientific">Pseudomonas syringae pv. tomato (strain ATCC BAA-871 / DC3000)</name>
    <dbReference type="NCBI Taxonomy" id="223283"/>
    <lineage>
        <taxon>Bacteria</taxon>
        <taxon>Pseudomonadati</taxon>
        <taxon>Pseudomonadota</taxon>
        <taxon>Gammaproteobacteria</taxon>
        <taxon>Pseudomonadales</taxon>
        <taxon>Pseudomonadaceae</taxon>
        <taxon>Pseudomonas</taxon>
    </lineage>
</organism>
<reference key="1">
    <citation type="journal article" date="2003" name="Proc. Natl. Acad. Sci. U.S.A.">
        <title>The complete genome sequence of the Arabidopsis and tomato pathogen Pseudomonas syringae pv. tomato DC3000.</title>
        <authorList>
            <person name="Buell C.R."/>
            <person name="Joardar V."/>
            <person name="Lindeberg M."/>
            <person name="Selengut J."/>
            <person name="Paulsen I.T."/>
            <person name="Gwinn M.L."/>
            <person name="Dodson R.J."/>
            <person name="DeBoy R.T."/>
            <person name="Durkin A.S."/>
            <person name="Kolonay J.F."/>
            <person name="Madupu R."/>
            <person name="Daugherty S.C."/>
            <person name="Brinkac L.M."/>
            <person name="Beanan M.J."/>
            <person name="Haft D.H."/>
            <person name="Nelson W.C."/>
            <person name="Davidsen T.M."/>
            <person name="Zafar N."/>
            <person name="Zhou L."/>
            <person name="Liu J."/>
            <person name="Yuan Q."/>
            <person name="Khouri H.M."/>
            <person name="Fedorova N.B."/>
            <person name="Tran B."/>
            <person name="Russell D."/>
            <person name="Berry K.J."/>
            <person name="Utterback T.R."/>
            <person name="Van Aken S.E."/>
            <person name="Feldblyum T.V."/>
            <person name="D'Ascenzo M."/>
            <person name="Deng W.-L."/>
            <person name="Ramos A.R."/>
            <person name="Alfano J.R."/>
            <person name="Cartinhour S."/>
            <person name="Chatterjee A.K."/>
            <person name="Delaney T.P."/>
            <person name="Lazarowitz S.G."/>
            <person name="Martin G.B."/>
            <person name="Schneider D.J."/>
            <person name="Tang X."/>
            <person name="Bender C.L."/>
            <person name="White O."/>
            <person name="Fraser C.M."/>
            <person name="Collmer A."/>
        </authorList>
    </citation>
    <scope>NUCLEOTIDE SEQUENCE [LARGE SCALE GENOMIC DNA]</scope>
    <source>
        <strain>ATCC BAA-871 / DC3000</strain>
    </source>
</reference>
<name>Y1596_PSESM</name>
<protein>
    <recommendedName>
        <fullName>UPF0337 protein PSPTO_1596</fullName>
    </recommendedName>
</protein>
<comment type="similarity">
    <text evidence="2">Belongs to the UPF0337 (CsbD) family.</text>
</comment>
<feature type="chain" id="PRO_0000210019" description="UPF0337 protein PSPTO_1596">
    <location>
        <begin position="1"/>
        <end position="63"/>
    </location>
</feature>
<feature type="region of interest" description="Disordered" evidence="1">
    <location>
        <begin position="20"/>
        <end position="63"/>
    </location>
</feature>
<feature type="compositionally biased region" description="Basic and acidic residues" evidence="1">
    <location>
        <begin position="50"/>
        <end position="63"/>
    </location>
</feature>
<proteinExistence type="inferred from homology"/>
<dbReference type="EMBL" id="AE016853">
    <property type="protein sequence ID" value="AAO55116.1"/>
    <property type="molecule type" value="Genomic_DNA"/>
</dbReference>
<dbReference type="RefSeq" id="NP_791421.1">
    <property type="nucleotide sequence ID" value="NC_004578.1"/>
</dbReference>
<dbReference type="RefSeq" id="WP_005767547.1">
    <property type="nucleotide sequence ID" value="NC_004578.1"/>
</dbReference>
<dbReference type="SMR" id="Q886I3"/>
<dbReference type="STRING" id="223283.PSPTO_1596"/>
<dbReference type="KEGG" id="pst:PSPTO_1596"/>
<dbReference type="PATRIC" id="fig|223283.9.peg.1620"/>
<dbReference type="eggNOG" id="COG3237">
    <property type="taxonomic scope" value="Bacteria"/>
</dbReference>
<dbReference type="HOGENOM" id="CLU_135567_3_2_6"/>
<dbReference type="OrthoDB" id="7226109at2"/>
<dbReference type="PhylomeDB" id="Q886I3"/>
<dbReference type="Proteomes" id="UP000002515">
    <property type="component" value="Chromosome"/>
</dbReference>
<dbReference type="Gene3D" id="1.10.1470.10">
    <property type="entry name" value="YjbJ"/>
    <property type="match status" value="1"/>
</dbReference>
<dbReference type="InterPro" id="IPR008462">
    <property type="entry name" value="CsbD"/>
</dbReference>
<dbReference type="InterPro" id="IPR036629">
    <property type="entry name" value="YjbJ_sf"/>
</dbReference>
<dbReference type="Pfam" id="PF05532">
    <property type="entry name" value="CsbD"/>
    <property type="match status" value="1"/>
</dbReference>
<dbReference type="SUPFAM" id="SSF69047">
    <property type="entry name" value="Hypothetical protein YjbJ"/>
    <property type="match status" value="1"/>
</dbReference>